<reference key="1">
    <citation type="journal article" date="2008" name="Genome Res.">
        <title>Insights from the complete genome sequence of Mycobacterium marinum on the evolution of Mycobacterium tuberculosis.</title>
        <authorList>
            <person name="Stinear T.P."/>
            <person name="Seemann T."/>
            <person name="Harrison P.F."/>
            <person name="Jenkin G.A."/>
            <person name="Davies J.K."/>
            <person name="Johnson P.D."/>
            <person name="Abdellah Z."/>
            <person name="Arrowsmith C."/>
            <person name="Chillingworth T."/>
            <person name="Churcher C."/>
            <person name="Clarke K."/>
            <person name="Cronin A."/>
            <person name="Davis P."/>
            <person name="Goodhead I."/>
            <person name="Holroyd N."/>
            <person name="Jagels K."/>
            <person name="Lord A."/>
            <person name="Moule S."/>
            <person name="Mungall K."/>
            <person name="Norbertczak H."/>
            <person name="Quail M.A."/>
            <person name="Rabbinowitsch E."/>
            <person name="Walker D."/>
            <person name="White B."/>
            <person name="Whitehead S."/>
            <person name="Small P.L."/>
            <person name="Brosch R."/>
            <person name="Ramakrishnan L."/>
            <person name="Fischbach M.A."/>
            <person name="Parkhill J."/>
            <person name="Cole S.T."/>
        </authorList>
    </citation>
    <scope>NUCLEOTIDE SEQUENCE [LARGE SCALE GENOMIC DNA]</scope>
    <source>
        <strain>ATCC BAA-535 / M</strain>
    </source>
</reference>
<comment type="function">
    <text evidence="1">Transfers the 4'-phosphopantetheine moiety from coenzyme A to a Ser of acyl-carrier-protein.</text>
</comment>
<comment type="catalytic activity">
    <reaction evidence="1">
        <text>apo-[ACP] + CoA = holo-[ACP] + adenosine 3',5'-bisphosphate + H(+)</text>
        <dbReference type="Rhea" id="RHEA:12068"/>
        <dbReference type="Rhea" id="RHEA-COMP:9685"/>
        <dbReference type="Rhea" id="RHEA-COMP:9690"/>
        <dbReference type="ChEBI" id="CHEBI:15378"/>
        <dbReference type="ChEBI" id="CHEBI:29999"/>
        <dbReference type="ChEBI" id="CHEBI:57287"/>
        <dbReference type="ChEBI" id="CHEBI:58343"/>
        <dbReference type="ChEBI" id="CHEBI:64479"/>
        <dbReference type="EC" id="2.7.8.7"/>
    </reaction>
</comment>
<comment type="cofactor">
    <cofactor evidence="1">
        <name>Mg(2+)</name>
        <dbReference type="ChEBI" id="CHEBI:18420"/>
    </cofactor>
</comment>
<comment type="subcellular location">
    <subcellularLocation>
        <location evidence="1">Cytoplasm</location>
    </subcellularLocation>
</comment>
<comment type="similarity">
    <text evidence="1">Belongs to the P-Pant transferase superfamily. AcpS family.</text>
</comment>
<gene>
    <name evidence="1" type="primary">acpS</name>
    <name type="ordered locus">MMAR_3961</name>
</gene>
<proteinExistence type="inferred from homology"/>
<protein>
    <recommendedName>
        <fullName evidence="1">Holo-[acyl-carrier-protein] synthase</fullName>
        <shortName evidence="1">Holo-ACP synthase</shortName>
        <ecNumber evidence="1">2.7.8.7</ecNumber>
    </recommendedName>
    <alternativeName>
        <fullName evidence="1">4'-phosphopantetheinyl transferase AcpS</fullName>
    </alternativeName>
</protein>
<feature type="chain" id="PRO_1000093897" description="Holo-[acyl-carrier-protein] synthase">
    <location>
        <begin position="1"/>
        <end position="130"/>
    </location>
</feature>
<feature type="binding site" evidence="1">
    <location>
        <position position="9"/>
    </location>
    <ligand>
        <name>Mg(2+)</name>
        <dbReference type="ChEBI" id="CHEBI:18420"/>
    </ligand>
</feature>
<feature type="binding site" evidence="1">
    <location>
        <position position="58"/>
    </location>
    <ligand>
        <name>Mg(2+)</name>
        <dbReference type="ChEBI" id="CHEBI:18420"/>
    </ligand>
</feature>
<sequence>MGIVGVGIDLVSIPDFAEQVDQPGTAFAATFTPGERRDASDKSSSAARHLAARWAAKEAVIKAWSGSRFAQRPVLPEDIHRDIEVVTDMWGRPRVRLTGEIAKHLADVTIHVSLTHEGDTAAAVAILETS</sequence>
<keyword id="KW-0963">Cytoplasm</keyword>
<keyword id="KW-0275">Fatty acid biosynthesis</keyword>
<keyword id="KW-0276">Fatty acid metabolism</keyword>
<keyword id="KW-0444">Lipid biosynthesis</keyword>
<keyword id="KW-0443">Lipid metabolism</keyword>
<keyword id="KW-0460">Magnesium</keyword>
<keyword id="KW-0479">Metal-binding</keyword>
<keyword id="KW-1185">Reference proteome</keyword>
<keyword id="KW-0808">Transferase</keyword>
<evidence type="ECO:0000255" key="1">
    <source>
        <dbReference type="HAMAP-Rule" id="MF_00101"/>
    </source>
</evidence>
<name>ACPS_MYCMM</name>
<dbReference type="EC" id="2.7.8.7" evidence="1"/>
<dbReference type="EMBL" id="CP000854">
    <property type="protein sequence ID" value="ACC42369.1"/>
    <property type="molecule type" value="Genomic_DNA"/>
</dbReference>
<dbReference type="RefSeq" id="WP_011741517.1">
    <property type="nucleotide sequence ID" value="NC_010612.1"/>
</dbReference>
<dbReference type="SMR" id="B2HPL7"/>
<dbReference type="STRING" id="216594.MMAR_3961"/>
<dbReference type="GeneID" id="34341647"/>
<dbReference type="KEGG" id="mmi:MMAR_3961"/>
<dbReference type="eggNOG" id="COG0736">
    <property type="taxonomic scope" value="Bacteria"/>
</dbReference>
<dbReference type="HOGENOM" id="CLU_089696_2_0_11"/>
<dbReference type="OrthoDB" id="517356at2"/>
<dbReference type="Proteomes" id="UP000001190">
    <property type="component" value="Chromosome"/>
</dbReference>
<dbReference type="GO" id="GO:0005737">
    <property type="term" value="C:cytoplasm"/>
    <property type="evidence" value="ECO:0007669"/>
    <property type="project" value="UniProtKB-SubCell"/>
</dbReference>
<dbReference type="GO" id="GO:0008897">
    <property type="term" value="F:holo-[acyl-carrier-protein] synthase activity"/>
    <property type="evidence" value="ECO:0007669"/>
    <property type="project" value="UniProtKB-UniRule"/>
</dbReference>
<dbReference type="GO" id="GO:0000287">
    <property type="term" value="F:magnesium ion binding"/>
    <property type="evidence" value="ECO:0007669"/>
    <property type="project" value="UniProtKB-UniRule"/>
</dbReference>
<dbReference type="GO" id="GO:0006633">
    <property type="term" value="P:fatty acid biosynthetic process"/>
    <property type="evidence" value="ECO:0007669"/>
    <property type="project" value="UniProtKB-UniRule"/>
</dbReference>
<dbReference type="Gene3D" id="3.90.470.20">
    <property type="entry name" value="4'-phosphopantetheinyl transferase domain"/>
    <property type="match status" value="1"/>
</dbReference>
<dbReference type="HAMAP" id="MF_00101">
    <property type="entry name" value="AcpS"/>
    <property type="match status" value="1"/>
</dbReference>
<dbReference type="InterPro" id="IPR008278">
    <property type="entry name" value="4-PPantetheinyl_Trfase_dom"/>
</dbReference>
<dbReference type="InterPro" id="IPR037143">
    <property type="entry name" value="4-PPantetheinyl_Trfase_dom_sf"/>
</dbReference>
<dbReference type="InterPro" id="IPR002582">
    <property type="entry name" value="ACPS"/>
</dbReference>
<dbReference type="InterPro" id="IPR004568">
    <property type="entry name" value="Ppantetheine-prot_Trfase_dom"/>
</dbReference>
<dbReference type="NCBIfam" id="TIGR00556">
    <property type="entry name" value="pantethn_trn"/>
    <property type="match status" value="1"/>
</dbReference>
<dbReference type="NCBIfam" id="NF000831">
    <property type="entry name" value="PRK00070.3-1"/>
    <property type="match status" value="1"/>
</dbReference>
<dbReference type="Pfam" id="PF01648">
    <property type="entry name" value="ACPS"/>
    <property type="match status" value="1"/>
</dbReference>
<dbReference type="SUPFAM" id="SSF56214">
    <property type="entry name" value="4'-phosphopantetheinyl transferase"/>
    <property type="match status" value="1"/>
</dbReference>
<accession>B2HPL7</accession>
<organism>
    <name type="scientific">Mycobacterium marinum (strain ATCC BAA-535 / M)</name>
    <dbReference type="NCBI Taxonomy" id="216594"/>
    <lineage>
        <taxon>Bacteria</taxon>
        <taxon>Bacillati</taxon>
        <taxon>Actinomycetota</taxon>
        <taxon>Actinomycetes</taxon>
        <taxon>Mycobacteriales</taxon>
        <taxon>Mycobacteriaceae</taxon>
        <taxon>Mycobacterium</taxon>
        <taxon>Mycobacterium ulcerans group</taxon>
    </lineage>
</organism>